<sequence>MAAPDRDTITAIATPPGKGGVGIVRISGSNLGPVLDALLGRPPRPRYAEFRHFLDADGRAIDSGIALYFPAPRSFTGENVLELHGHGGPVVLDLLLRRTLQLGCRLARPGEFSERAYLNGKLDLAQAEAIADLIDSSTEESARSAQRSLQGEFSAHIHHLQECLVRLRTYVEAAIDFSDEDIDLLDDATLGHEITGLLDELDTIDTKAHQGALLREGLTTVIAGRPNVGKSSLLNALAGRDLAIVTEIPGTTRDLLRESLQVGGLPLHIVDTAGLRDSEDPIEREGIRRARDALANADCILLVCDARHTEAGDALPADLPETIPLIRIFNKIDLTGAPASLTVERETTVIHLSARTGEGVDLLRQEIIRRAGYKKGTEGVFSARRRHLDAIRRARAAVANARLYLHTKTAELLAEELRAAQKALGEITGEFTNEDLLNRIFSSFCLGK</sequence>
<evidence type="ECO:0000255" key="1">
    <source>
        <dbReference type="HAMAP-Rule" id="MF_00379"/>
    </source>
</evidence>
<feature type="chain" id="PRO_1000048841" description="tRNA modification GTPase MnmE">
    <location>
        <begin position="1"/>
        <end position="448"/>
    </location>
</feature>
<feature type="domain" description="TrmE-type G">
    <location>
        <begin position="217"/>
        <end position="372"/>
    </location>
</feature>
<feature type="binding site" evidence="1">
    <location>
        <position position="25"/>
    </location>
    <ligand>
        <name>(6S)-5-formyl-5,6,7,8-tetrahydrofolate</name>
        <dbReference type="ChEBI" id="CHEBI:57457"/>
    </ligand>
</feature>
<feature type="binding site" evidence="1">
    <location>
        <position position="82"/>
    </location>
    <ligand>
        <name>(6S)-5-formyl-5,6,7,8-tetrahydrofolate</name>
        <dbReference type="ChEBI" id="CHEBI:57457"/>
    </ligand>
</feature>
<feature type="binding site" evidence="1">
    <location>
        <position position="121"/>
    </location>
    <ligand>
        <name>(6S)-5-formyl-5,6,7,8-tetrahydrofolate</name>
        <dbReference type="ChEBI" id="CHEBI:57457"/>
    </ligand>
</feature>
<feature type="binding site" evidence="1">
    <location>
        <begin position="227"/>
        <end position="232"/>
    </location>
    <ligand>
        <name>GTP</name>
        <dbReference type="ChEBI" id="CHEBI:37565"/>
    </ligand>
</feature>
<feature type="binding site" evidence="1">
    <location>
        <position position="227"/>
    </location>
    <ligand>
        <name>K(+)</name>
        <dbReference type="ChEBI" id="CHEBI:29103"/>
    </ligand>
</feature>
<feature type="binding site" evidence="1">
    <location>
        <position position="231"/>
    </location>
    <ligand>
        <name>Mg(2+)</name>
        <dbReference type="ChEBI" id="CHEBI:18420"/>
    </ligand>
</feature>
<feature type="binding site" evidence="1">
    <location>
        <begin position="246"/>
        <end position="252"/>
    </location>
    <ligand>
        <name>GTP</name>
        <dbReference type="ChEBI" id="CHEBI:37565"/>
    </ligand>
</feature>
<feature type="binding site" evidence="1">
    <location>
        <position position="246"/>
    </location>
    <ligand>
        <name>K(+)</name>
        <dbReference type="ChEBI" id="CHEBI:29103"/>
    </ligand>
</feature>
<feature type="binding site" evidence="1">
    <location>
        <position position="248"/>
    </location>
    <ligand>
        <name>K(+)</name>
        <dbReference type="ChEBI" id="CHEBI:29103"/>
    </ligand>
</feature>
<feature type="binding site" evidence="1">
    <location>
        <position position="251"/>
    </location>
    <ligand>
        <name>K(+)</name>
        <dbReference type="ChEBI" id="CHEBI:29103"/>
    </ligand>
</feature>
<feature type="binding site" evidence="1">
    <location>
        <position position="252"/>
    </location>
    <ligand>
        <name>Mg(2+)</name>
        <dbReference type="ChEBI" id="CHEBI:18420"/>
    </ligand>
</feature>
<feature type="binding site" evidence="1">
    <location>
        <begin position="271"/>
        <end position="274"/>
    </location>
    <ligand>
        <name>GTP</name>
        <dbReference type="ChEBI" id="CHEBI:37565"/>
    </ligand>
</feature>
<feature type="binding site" evidence="1">
    <location>
        <begin position="353"/>
        <end position="355"/>
    </location>
    <ligand>
        <name>GTP</name>
        <dbReference type="ChEBI" id="CHEBI:37565"/>
    </ligand>
</feature>
<feature type="binding site" evidence="1">
    <location>
        <position position="448"/>
    </location>
    <ligand>
        <name>(6S)-5-formyl-5,6,7,8-tetrahydrofolate</name>
        <dbReference type="ChEBI" id="CHEBI:57457"/>
    </ligand>
</feature>
<gene>
    <name evidence="1" type="primary">mnmE</name>
    <name evidence="1" type="synonym">trmE</name>
    <name type="ordered locus">MCA3038</name>
</gene>
<organism>
    <name type="scientific">Methylococcus capsulatus (strain ATCC 33009 / NCIMB 11132 / Bath)</name>
    <dbReference type="NCBI Taxonomy" id="243233"/>
    <lineage>
        <taxon>Bacteria</taxon>
        <taxon>Pseudomonadati</taxon>
        <taxon>Pseudomonadota</taxon>
        <taxon>Gammaproteobacteria</taxon>
        <taxon>Methylococcales</taxon>
        <taxon>Methylococcaceae</taxon>
        <taxon>Methylococcus</taxon>
    </lineage>
</organism>
<comment type="function">
    <text evidence="1">Exhibits a very high intrinsic GTPase hydrolysis rate. Involved in the addition of a carboxymethylaminomethyl (cmnm) group at the wobble position (U34) of certain tRNAs, forming tRNA-cmnm(5)s(2)U34.</text>
</comment>
<comment type="cofactor">
    <cofactor evidence="1">
        <name>K(+)</name>
        <dbReference type="ChEBI" id="CHEBI:29103"/>
    </cofactor>
    <text evidence="1">Binds 1 potassium ion per subunit.</text>
</comment>
<comment type="subunit">
    <text evidence="1">Homodimer. Heterotetramer of two MnmE and two MnmG subunits.</text>
</comment>
<comment type="subcellular location">
    <subcellularLocation>
        <location evidence="1">Cytoplasm</location>
    </subcellularLocation>
</comment>
<comment type="similarity">
    <text evidence="1">Belongs to the TRAFAC class TrmE-Era-EngA-EngB-Septin-like GTPase superfamily. TrmE GTPase family.</text>
</comment>
<reference key="1">
    <citation type="journal article" date="2004" name="PLoS Biol.">
        <title>Genomic insights into methanotrophy: the complete genome sequence of Methylococcus capsulatus (Bath).</title>
        <authorList>
            <person name="Ward N.L."/>
            <person name="Larsen O."/>
            <person name="Sakwa J."/>
            <person name="Bruseth L."/>
            <person name="Khouri H.M."/>
            <person name="Durkin A.S."/>
            <person name="Dimitrov G."/>
            <person name="Jiang L."/>
            <person name="Scanlan D."/>
            <person name="Kang K.H."/>
            <person name="Lewis M.R."/>
            <person name="Nelson K.E."/>
            <person name="Methe B.A."/>
            <person name="Wu M."/>
            <person name="Heidelberg J.F."/>
            <person name="Paulsen I.T."/>
            <person name="Fouts D.E."/>
            <person name="Ravel J."/>
            <person name="Tettelin H."/>
            <person name="Ren Q."/>
            <person name="Read T.D."/>
            <person name="DeBoy R.T."/>
            <person name="Seshadri R."/>
            <person name="Salzberg S.L."/>
            <person name="Jensen H.B."/>
            <person name="Birkeland N.K."/>
            <person name="Nelson W.C."/>
            <person name="Dodson R.J."/>
            <person name="Grindhaug S.H."/>
            <person name="Holt I.E."/>
            <person name="Eidhammer I."/>
            <person name="Jonasen I."/>
            <person name="Vanaken S."/>
            <person name="Utterback T.R."/>
            <person name="Feldblyum T.V."/>
            <person name="Fraser C.M."/>
            <person name="Lillehaug J.R."/>
            <person name="Eisen J.A."/>
        </authorList>
    </citation>
    <scope>NUCLEOTIDE SEQUENCE [LARGE SCALE GENOMIC DNA]</scope>
    <source>
        <strain>ATCC 33009 / NCIMB 11132 / Bath</strain>
    </source>
</reference>
<protein>
    <recommendedName>
        <fullName evidence="1">tRNA modification GTPase MnmE</fullName>
        <ecNumber evidence="1">3.6.-.-</ecNumber>
    </recommendedName>
</protein>
<keyword id="KW-0963">Cytoplasm</keyword>
<keyword id="KW-0342">GTP-binding</keyword>
<keyword id="KW-0378">Hydrolase</keyword>
<keyword id="KW-0460">Magnesium</keyword>
<keyword id="KW-0479">Metal-binding</keyword>
<keyword id="KW-0547">Nucleotide-binding</keyword>
<keyword id="KW-0630">Potassium</keyword>
<keyword id="KW-1185">Reference proteome</keyword>
<keyword id="KW-0819">tRNA processing</keyword>
<accession>Q602M5</accession>
<dbReference type="EC" id="3.6.-.-" evidence="1"/>
<dbReference type="EMBL" id="AE017282">
    <property type="protein sequence ID" value="AAU90903.1"/>
    <property type="molecule type" value="Genomic_DNA"/>
</dbReference>
<dbReference type="RefSeq" id="WP_010962226.1">
    <property type="nucleotide sequence ID" value="NC_002977.6"/>
</dbReference>
<dbReference type="SMR" id="Q602M5"/>
<dbReference type="STRING" id="243233.MCA3038"/>
<dbReference type="GeneID" id="88225200"/>
<dbReference type="KEGG" id="mca:MCA3038"/>
<dbReference type="eggNOG" id="COG0486">
    <property type="taxonomic scope" value="Bacteria"/>
</dbReference>
<dbReference type="HOGENOM" id="CLU_019624_4_1_6"/>
<dbReference type="Proteomes" id="UP000006821">
    <property type="component" value="Chromosome"/>
</dbReference>
<dbReference type="GO" id="GO:0005829">
    <property type="term" value="C:cytosol"/>
    <property type="evidence" value="ECO:0007669"/>
    <property type="project" value="TreeGrafter"/>
</dbReference>
<dbReference type="GO" id="GO:0005525">
    <property type="term" value="F:GTP binding"/>
    <property type="evidence" value="ECO:0007669"/>
    <property type="project" value="UniProtKB-UniRule"/>
</dbReference>
<dbReference type="GO" id="GO:0003924">
    <property type="term" value="F:GTPase activity"/>
    <property type="evidence" value="ECO:0007669"/>
    <property type="project" value="UniProtKB-UniRule"/>
</dbReference>
<dbReference type="GO" id="GO:0046872">
    <property type="term" value="F:metal ion binding"/>
    <property type="evidence" value="ECO:0007669"/>
    <property type="project" value="UniProtKB-KW"/>
</dbReference>
<dbReference type="GO" id="GO:0030488">
    <property type="term" value="P:tRNA methylation"/>
    <property type="evidence" value="ECO:0007669"/>
    <property type="project" value="TreeGrafter"/>
</dbReference>
<dbReference type="GO" id="GO:0002098">
    <property type="term" value="P:tRNA wobble uridine modification"/>
    <property type="evidence" value="ECO:0007669"/>
    <property type="project" value="TreeGrafter"/>
</dbReference>
<dbReference type="CDD" id="cd04164">
    <property type="entry name" value="trmE"/>
    <property type="match status" value="1"/>
</dbReference>
<dbReference type="CDD" id="cd14858">
    <property type="entry name" value="TrmE_N"/>
    <property type="match status" value="1"/>
</dbReference>
<dbReference type="Gene3D" id="3.40.50.300">
    <property type="entry name" value="P-loop containing nucleotide triphosphate hydrolases"/>
    <property type="match status" value="1"/>
</dbReference>
<dbReference type="Gene3D" id="3.30.1360.120">
    <property type="entry name" value="Probable tRNA modification gtpase trme, domain 1"/>
    <property type="match status" value="1"/>
</dbReference>
<dbReference type="Gene3D" id="1.20.120.430">
    <property type="entry name" value="tRNA modification GTPase MnmE domain 2"/>
    <property type="match status" value="1"/>
</dbReference>
<dbReference type="HAMAP" id="MF_00379">
    <property type="entry name" value="GTPase_MnmE"/>
    <property type="match status" value="1"/>
</dbReference>
<dbReference type="InterPro" id="IPR031168">
    <property type="entry name" value="G_TrmE"/>
</dbReference>
<dbReference type="InterPro" id="IPR006073">
    <property type="entry name" value="GTP-bd"/>
</dbReference>
<dbReference type="InterPro" id="IPR018948">
    <property type="entry name" value="GTP-bd_TrmE_N"/>
</dbReference>
<dbReference type="InterPro" id="IPR004520">
    <property type="entry name" value="GTPase_MnmE"/>
</dbReference>
<dbReference type="InterPro" id="IPR027368">
    <property type="entry name" value="MnmE_dom2"/>
</dbReference>
<dbReference type="InterPro" id="IPR025867">
    <property type="entry name" value="MnmE_helical"/>
</dbReference>
<dbReference type="InterPro" id="IPR027417">
    <property type="entry name" value="P-loop_NTPase"/>
</dbReference>
<dbReference type="InterPro" id="IPR005225">
    <property type="entry name" value="Small_GTP-bd"/>
</dbReference>
<dbReference type="InterPro" id="IPR027266">
    <property type="entry name" value="TrmE/GcvT_dom1"/>
</dbReference>
<dbReference type="NCBIfam" id="TIGR00450">
    <property type="entry name" value="mnmE_trmE_thdF"/>
    <property type="match status" value="1"/>
</dbReference>
<dbReference type="NCBIfam" id="NF003661">
    <property type="entry name" value="PRK05291.1-3"/>
    <property type="match status" value="1"/>
</dbReference>
<dbReference type="NCBIfam" id="TIGR00231">
    <property type="entry name" value="small_GTP"/>
    <property type="match status" value="1"/>
</dbReference>
<dbReference type="PANTHER" id="PTHR42714">
    <property type="entry name" value="TRNA MODIFICATION GTPASE GTPBP3"/>
    <property type="match status" value="1"/>
</dbReference>
<dbReference type="PANTHER" id="PTHR42714:SF2">
    <property type="entry name" value="TRNA MODIFICATION GTPASE GTPBP3, MITOCHONDRIAL"/>
    <property type="match status" value="1"/>
</dbReference>
<dbReference type="Pfam" id="PF01926">
    <property type="entry name" value="MMR_HSR1"/>
    <property type="match status" value="1"/>
</dbReference>
<dbReference type="Pfam" id="PF12631">
    <property type="entry name" value="MnmE_helical"/>
    <property type="match status" value="1"/>
</dbReference>
<dbReference type="Pfam" id="PF10396">
    <property type="entry name" value="TrmE_N"/>
    <property type="match status" value="1"/>
</dbReference>
<dbReference type="SUPFAM" id="SSF52540">
    <property type="entry name" value="P-loop containing nucleoside triphosphate hydrolases"/>
    <property type="match status" value="1"/>
</dbReference>
<dbReference type="PROSITE" id="PS51709">
    <property type="entry name" value="G_TRME"/>
    <property type="match status" value="1"/>
</dbReference>
<name>MNME_METCA</name>
<proteinExistence type="inferred from homology"/>